<name>TRUD_ECOSM</name>
<organism>
    <name type="scientific">Escherichia coli (strain SMS-3-5 / SECEC)</name>
    <dbReference type="NCBI Taxonomy" id="439855"/>
    <lineage>
        <taxon>Bacteria</taxon>
        <taxon>Pseudomonadati</taxon>
        <taxon>Pseudomonadota</taxon>
        <taxon>Gammaproteobacteria</taxon>
        <taxon>Enterobacterales</taxon>
        <taxon>Enterobacteriaceae</taxon>
        <taxon>Escherichia</taxon>
    </lineage>
</organism>
<gene>
    <name evidence="1" type="primary">truD</name>
    <name type="ordered locus">EcSMS35_2870</name>
</gene>
<evidence type="ECO:0000255" key="1">
    <source>
        <dbReference type="HAMAP-Rule" id="MF_01082"/>
    </source>
</evidence>
<dbReference type="EC" id="5.4.99.27" evidence="1"/>
<dbReference type="EMBL" id="CP000970">
    <property type="protein sequence ID" value="ACB16947.1"/>
    <property type="molecule type" value="Genomic_DNA"/>
</dbReference>
<dbReference type="RefSeq" id="WP_000568936.1">
    <property type="nucleotide sequence ID" value="NC_010498.1"/>
</dbReference>
<dbReference type="SMR" id="B1LQ65"/>
<dbReference type="KEGG" id="ecm:EcSMS35_2870"/>
<dbReference type="HOGENOM" id="CLU_005281_4_0_6"/>
<dbReference type="Proteomes" id="UP000007011">
    <property type="component" value="Chromosome"/>
</dbReference>
<dbReference type="GO" id="GO:0005829">
    <property type="term" value="C:cytosol"/>
    <property type="evidence" value="ECO:0007669"/>
    <property type="project" value="TreeGrafter"/>
</dbReference>
<dbReference type="GO" id="GO:0003723">
    <property type="term" value="F:RNA binding"/>
    <property type="evidence" value="ECO:0007669"/>
    <property type="project" value="InterPro"/>
</dbReference>
<dbReference type="GO" id="GO:0160150">
    <property type="term" value="F:tRNA pseudouridine(13) synthase activity"/>
    <property type="evidence" value="ECO:0007669"/>
    <property type="project" value="UniProtKB-EC"/>
</dbReference>
<dbReference type="GO" id="GO:0031119">
    <property type="term" value="P:tRNA pseudouridine synthesis"/>
    <property type="evidence" value="ECO:0007669"/>
    <property type="project" value="UniProtKB-UniRule"/>
</dbReference>
<dbReference type="CDD" id="cd02575">
    <property type="entry name" value="PseudoU_synth_EcTruD"/>
    <property type="match status" value="1"/>
</dbReference>
<dbReference type="FunFam" id="3.30.2340.10:FF:000001">
    <property type="entry name" value="tRNA pseudouridine synthase D"/>
    <property type="match status" value="1"/>
</dbReference>
<dbReference type="FunFam" id="3.30.2350.20:FF:000001">
    <property type="entry name" value="tRNA pseudouridine synthase D"/>
    <property type="match status" value="1"/>
</dbReference>
<dbReference type="Gene3D" id="3.30.2350.20">
    <property type="entry name" value="TruD, catalytic domain"/>
    <property type="match status" value="1"/>
</dbReference>
<dbReference type="Gene3D" id="3.30.2340.10">
    <property type="entry name" value="TruD, insertion domain"/>
    <property type="match status" value="1"/>
</dbReference>
<dbReference type="HAMAP" id="MF_01082">
    <property type="entry name" value="TruD"/>
    <property type="match status" value="1"/>
</dbReference>
<dbReference type="InterPro" id="IPR020103">
    <property type="entry name" value="PsdUridine_synth_cat_dom_sf"/>
</dbReference>
<dbReference type="InterPro" id="IPR001656">
    <property type="entry name" value="PsdUridine_synth_TruD"/>
</dbReference>
<dbReference type="InterPro" id="IPR020119">
    <property type="entry name" value="PsdUridine_synth_TruD_CS"/>
</dbReference>
<dbReference type="InterPro" id="IPR011760">
    <property type="entry name" value="PsdUridine_synth_TruD_insert"/>
</dbReference>
<dbReference type="InterPro" id="IPR042214">
    <property type="entry name" value="TruD_catalytic"/>
</dbReference>
<dbReference type="InterPro" id="IPR043165">
    <property type="entry name" value="TruD_insert_sf"/>
</dbReference>
<dbReference type="InterPro" id="IPR050170">
    <property type="entry name" value="TruD_pseudoU_synthase"/>
</dbReference>
<dbReference type="NCBIfam" id="NF002155">
    <property type="entry name" value="PRK00984.1-4"/>
    <property type="match status" value="1"/>
</dbReference>
<dbReference type="NCBIfam" id="TIGR00094">
    <property type="entry name" value="tRNA_TruD_broad"/>
    <property type="match status" value="1"/>
</dbReference>
<dbReference type="PANTHER" id="PTHR47811">
    <property type="entry name" value="TRNA PSEUDOURIDINE SYNTHASE D"/>
    <property type="match status" value="1"/>
</dbReference>
<dbReference type="PANTHER" id="PTHR47811:SF1">
    <property type="entry name" value="TRNA PSEUDOURIDINE SYNTHASE D"/>
    <property type="match status" value="1"/>
</dbReference>
<dbReference type="Pfam" id="PF01142">
    <property type="entry name" value="TruD"/>
    <property type="match status" value="2"/>
</dbReference>
<dbReference type="SUPFAM" id="SSF55120">
    <property type="entry name" value="Pseudouridine synthase"/>
    <property type="match status" value="1"/>
</dbReference>
<dbReference type="PROSITE" id="PS50984">
    <property type="entry name" value="TRUD"/>
    <property type="match status" value="1"/>
</dbReference>
<dbReference type="PROSITE" id="PS01268">
    <property type="entry name" value="UPF0024"/>
    <property type="match status" value="1"/>
</dbReference>
<feature type="chain" id="PRO_1000136836" description="tRNA pseudouridine synthase D">
    <location>
        <begin position="1"/>
        <end position="349"/>
    </location>
</feature>
<feature type="domain" description="TRUD" evidence="1">
    <location>
        <begin position="155"/>
        <end position="303"/>
    </location>
</feature>
<feature type="active site" description="Nucleophile" evidence="1">
    <location>
        <position position="80"/>
    </location>
</feature>
<feature type="binding site" evidence="1">
    <location>
        <position position="27"/>
    </location>
    <ligand>
        <name>substrate</name>
    </ligand>
</feature>
<feature type="binding site" evidence="1">
    <location>
        <position position="129"/>
    </location>
    <ligand>
        <name>substrate</name>
    </ligand>
</feature>
<feature type="binding site" evidence="1">
    <location>
        <position position="329"/>
    </location>
    <ligand>
        <name>substrate</name>
    </ligand>
</feature>
<protein>
    <recommendedName>
        <fullName evidence="1">tRNA pseudouridine synthase D</fullName>
        <ecNumber evidence="1">5.4.99.27</ecNumber>
    </recommendedName>
    <alternativeName>
        <fullName evidence="1">tRNA pseudouridine(13) synthase</fullName>
    </alternativeName>
    <alternativeName>
        <fullName evidence="1">tRNA pseudouridylate synthase D</fullName>
    </alternativeName>
    <alternativeName>
        <fullName evidence="1">tRNA-uridine isomerase D</fullName>
    </alternativeName>
</protein>
<reference key="1">
    <citation type="journal article" date="2008" name="J. Bacteriol.">
        <title>Insights into the environmental resistance gene pool from the genome sequence of the multidrug-resistant environmental isolate Escherichia coli SMS-3-5.</title>
        <authorList>
            <person name="Fricke W.F."/>
            <person name="Wright M.S."/>
            <person name="Lindell A.H."/>
            <person name="Harkins D.M."/>
            <person name="Baker-Austin C."/>
            <person name="Ravel J."/>
            <person name="Stepanauskas R."/>
        </authorList>
    </citation>
    <scope>NUCLEOTIDE SEQUENCE [LARGE SCALE GENOMIC DNA]</scope>
    <source>
        <strain>SMS-3-5 / SECEC</strain>
    </source>
</reference>
<sequence length="349" mass="39062">MIEFDNLTYLHGKPQGTGLLKANPEDFVVVEDLGFEPDGEGEHILVRILKNGCNTRFVADALAKFLKIHAREVSFAGQKDKHAVTEQWLCARVPGKEMPDLSAFQLEGCQVLEYARHKRKLRLGALKGNAFTLVLREVSNRDDVEQRLIDICVKGVPNYFGAQRFGIGGSNLQGALRWAQTNTPVRDRNKRSFWLSAARSALFNQIVAERLKKADVNQVVDGDALQLAGRGSWFVATTEEVAELQRRVNDKELMITAALPGSGEWGTQREALAFEQAAVAAETELQALLVREKVEAARRAMLLYPQQLSWNWWDDVTVEIRFWLPAGSFATSVVRELINTTGDYAHIAE</sequence>
<comment type="function">
    <text evidence="1">Responsible for synthesis of pseudouridine from uracil-13 in transfer RNAs.</text>
</comment>
<comment type="catalytic activity">
    <reaction evidence="1">
        <text>uridine(13) in tRNA = pseudouridine(13) in tRNA</text>
        <dbReference type="Rhea" id="RHEA:42540"/>
        <dbReference type="Rhea" id="RHEA-COMP:10105"/>
        <dbReference type="Rhea" id="RHEA-COMP:10106"/>
        <dbReference type="ChEBI" id="CHEBI:65314"/>
        <dbReference type="ChEBI" id="CHEBI:65315"/>
        <dbReference type="EC" id="5.4.99.27"/>
    </reaction>
</comment>
<comment type="similarity">
    <text evidence="1">Belongs to the pseudouridine synthase TruD family.</text>
</comment>
<keyword id="KW-0413">Isomerase</keyword>
<keyword id="KW-0819">tRNA processing</keyword>
<accession>B1LQ65</accession>
<proteinExistence type="inferred from homology"/>